<reference evidence="6" key="1">
    <citation type="journal article" date="2010" name="Peptides">
        <title>CAPA-peptides of praying mantids (Mantodea).</title>
        <authorList>
            <person name="Koehler R."/>
            <person name="Predel R."/>
        </authorList>
    </citation>
    <scope>PROTEIN SEQUENCE</scope>
    <scope>MASS SPECTROMETRY</scope>
    <scope>AMIDATION AT LEU-11</scope>
    <source>
        <tissue evidence="4">Abdominal perisympathetic organs</tissue>
    </source>
</reference>
<accession>P86659</accession>
<dbReference type="GO" id="GO:0005576">
    <property type="term" value="C:extracellular region"/>
    <property type="evidence" value="ECO:0007669"/>
    <property type="project" value="UniProtKB-SubCell"/>
</dbReference>
<dbReference type="GO" id="GO:0007218">
    <property type="term" value="P:neuropeptide signaling pathway"/>
    <property type="evidence" value="ECO:0007669"/>
    <property type="project" value="UniProtKB-KW"/>
</dbReference>
<dbReference type="InterPro" id="IPR013231">
    <property type="entry name" value="Periviscerokinin"/>
</dbReference>
<dbReference type="Pfam" id="PF08259">
    <property type="entry name" value="Periviscerokin"/>
    <property type="match status" value="1"/>
</dbReference>
<organism>
    <name type="scientific">Mantis religiosa</name>
    <name type="common">Praying mantis</name>
    <name type="synonym">Gryllus religiosa</name>
    <dbReference type="NCBI Taxonomy" id="7507"/>
    <lineage>
        <taxon>Eukaryota</taxon>
        <taxon>Metazoa</taxon>
        <taxon>Ecdysozoa</taxon>
        <taxon>Arthropoda</taxon>
        <taxon>Hexapoda</taxon>
        <taxon>Insecta</taxon>
        <taxon>Pterygota</taxon>
        <taxon>Neoptera</taxon>
        <taxon>Polyneoptera</taxon>
        <taxon>Dictyoptera</taxon>
        <taxon>Mantodea</taxon>
        <taxon>Eumantodea</taxon>
        <taxon>Mantoidea</taxon>
        <taxon>Mantidae</taxon>
        <taxon>Mantinae</taxon>
        <taxon>Mantini</taxon>
        <taxon>Mantis</taxon>
    </lineage>
</organism>
<comment type="function">
    <text evidence="1">Mediates visceral muscle contractile activity (myotropic activity).</text>
</comment>
<comment type="subcellular location">
    <subcellularLocation>
        <location evidence="2">Secreted</location>
    </subcellularLocation>
</comment>
<comment type="mass spectrometry" mass="1126.7" method="MALDI" evidence="4"/>
<comment type="miscellaneous">
    <text evidence="4">According to PubMed:19808072, a longer form of this peptide exists.</text>
</comment>
<comment type="similarity">
    <text evidence="3">Belongs to the periviscerokinin family.</text>
</comment>
<feature type="peptide" id="PRO_0000395589" description="Periviscerokinin-2" evidence="4">
    <location>
        <begin position="1"/>
        <end position="11"/>
    </location>
</feature>
<feature type="modified residue" description="Leucine amide" evidence="4">
    <location>
        <position position="11"/>
    </location>
</feature>
<feature type="unsure residue" description="L or I" evidence="4">
    <location>
        <position position="5"/>
    </location>
</feature>
<feature type="unsure residue" description="I or L" evidence="4">
    <location>
        <position position="6"/>
    </location>
</feature>
<feature type="unsure residue" description="L or I" evidence="4">
    <location>
        <position position="11"/>
    </location>
</feature>
<name>PVK2_MANRE</name>
<protein>
    <recommendedName>
        <fullName evidence="5">Periviscerokinin-2</fullName>
        <shortName evidence="5">Manre-PVK-2</shortName>
    </recommendedName>
</protein>
<evidence type="ECO:0000250" key="1">
    <source>
        <dbReference type="UniProtKB" id="P83923"/>
    </source>
</evidence>
<evidence type="ECO:0000250" key="2">
    <source>
        <dbReference type="UniProtKB" id="P84375"/>
    </source>
</evidence>
<evidence type="ECO:0000255" key="3"/>
<evidence type="ECO:0000269" key="4">
    <source>
    </source>
</evidence>
<evidence type="ECO:0000303" key="5">
    <source>
    </source>
</evidence>
<evidence type="ECO:0000305" key="6"/>
<sequence length="11" mass="1127">GASGLIPFPRL</sequence>
<proteinExistence type="evidence at protein level"/>
<keyword id="KW-0027">Amidation</keyword>
<keyword id="KW-0903">Direct protein sequencing</keyword>
<keyword id="KW-0527">Neuropeptide</keyword>
<keyword id="KW-0964">Secreted</keyword>